<protein>
    <recommendedName>
        <fullName>Cephamycin export protein CmcT</fullName>
    </recommendedName>
</protein>
<dbReference type="EMBL" id="Z13973">
    <property type="protein sequence ID" value="CAA78375.1"/>
    <property type="molecule type" value="Genomic_DNA"/>
</dbReference>
<dbReference type="PIR" id="S36190">
    <property type="entry name" value="S36190"/>
</dbReference>
<dbReference type="SMR" id="Q04733"/>
<dbReference type="TCDB" id="2.A.1.3.8">
    <property type="family name" value="the major facilitator superfamily (mfs)"/>
</dbReference>
<dbReference type="GO" id="GO:0005886">
    <property type="term" value="C:plasma membrane"/>
    <property type="evidence" value="ECO:0007669"/>
    <property type="project" value="UniProtKB-SubCell"/>
</dbReference>
<dbReference type="GO" id="GO:0022857">
    <property type="term" value="F:transmembrane transporter activity"/>
    <property type="evidence" value="ECO:0007669"/>
    <property type="project" value="InterPro"/>
</dbReference>
<dbReference type="GO" id="GO:0046677">
    <property type="term" value="P:response to antibiotic"/>
    <property type="evidence" value="ECO:0007669"/>
    <property type="project" value="UniProtKB-KW"/>
</dbReference>
<dbReference type="CDD" id="cd17321">
    <property type="entry name" value="MFS_MMR_MDR_like"/>
    <property type="match status" value="1"/>
</dbReference>
<dbReference type="Gene3D" id="1.20.1250.20">
    <property type="entry name" value="MFS general substrate transporter like domains"/>
    <property type="match status" value="1"/>
</dbReference>
<dbReference type="Gene3D" id="1.20.1720.10">
    <property type="entry name" value="Multidrug resistance protein D"/>
    <property type="match status" value="1"/>
</dbReference>
<dbReference type="InterPro" id="IPR011701">
    <property type="entry name" value="MFS"/>
</dbReference>
<dbReference type="InterPro" id="IPR020846">
    <property type="entry name" value="MFS_dom"/>
</dbReference>
<dbReference type="InterPro" id="IPR036259">
    <property type="entry name" value="MFS_trans_sf"/>
</dbReference>
<dbReference type="PANTHER" id="PTHR42718:SF46">
    <property type="entry name" value="BLR6921 PROTEIN"/>
    <property type="match status" value="1"/>
</dbReference>
<dbReference type="PANTHER" id="PTHR42718">
    <property type="entry name" value="MAJOR FACILITATOR SUPERFAMILY MULTIDRUG TRANSPORTER MFSC"/>
    <property type="match status" value="1"/>
</dbReference>
<dbReference type="Pfam" id="PF07690">
    <property type="entry name" value="MFS_1"/>
    <property type="match status" value="1"/>
</dbReference>
<dbReference type="SUPFAM" id="SSF103473">
    <property type="entry name" value="MFS general substrate transporter"/>
    <property type="match status" value="1"/>
</dbReference>
<dbReference type="PROSITE" id="PS50850">
    <property type="entry name" value="MFS"/>
    <property type="match status" value="1"/>
</dbReference>
<feature type="chain" id="PRO_0000173319" description="Cephamycin export protein CmcT">
    <location>
        <begin position="1"/>
        <end position="486"/>
    </location>
</feature>
<feature type="transmembrane region" description="Helical" evidence="1">
    <location>
        <begin position="24"/>
        <end position="44"/>
    </location>
</feature>
<feature type="transmembrane region" description="Helical" evidence="1">
    <location>
        <begin position="56"/>
        <end position="76"/>
    </location>
</feature>
<feature type="transmembrane region" description="Helical" evidence="1">
    <location>
        <begin position="88"/>
        <end position="108"/>
    </location>
</feature>
<feature type="transmembrane region" description="Helical" evidence="1">
    <location>
        <begin position="121"/>
        <end position="141"/>
    </location>
</feature>
<feature type="transmembrane region" description="Helical" evidence="1">
    <location>
        <begin position="153"/>
        <end position="173"/>
    </location>
</feature>
<feature type="transmembrane region" description="Helical" evidence="1">
    <location>
        <begin position="178"/>
        <end position="198"/>
    </location>
</feature>
<feature type="transmembrane region" description="Helical" evidence="1">
    <location>
        <begin position="210"/>
        <end position="230"/>
    </location>
</feature>
<feature type="transmembrane region" description="Helical" evidence="1">
    <location>
        <begin position="241"/>
        <end position="261"/>
    </location>
</feature>
<feature type="transmembrane region" description="Helical" evidence="1">
    <location>
        <begin position="284"/>
        <end position="304"/>
    </location>
</feature>
<feature type="transmembrane region" description="Helical" evidence="1">
    <location>
        <begin position="317"/>
        <end position="337"/>
    </location>
</feature>
<feature type="transmembrane region" description="Helical" evidence="1">
    <location>
        <begin position="345"/>
        <end position="365"/>
    </location>
</feature>
<feature type="transmembrane region" description="Helical" evidence="1">
    <location>
        <begin position="369"/>
        <end position="389"/>
    </location>
</feature>
<feature type="transmembrane region" description="Helical" evidence="1">
    <location>
        <begin position="418"/>
        <end position="438"/>
    </location>
</feature>
<feature type="transmembrane region" description="Helical" evidence="1">
    <location>
        <begin position="450"/>
        <end position="470"/>
    </location>
</feature>
<organism>
    <name type="scientific">Amycolatopsis lactamdurans</name>
    <name type="common">Nocardia lactamdurans</name>
    <dbReference type="NCBI Taxonomy" id="1913"/>
    <lineage>
        <taxon>Bacteria</taxon>
        <taxon>Bacillati</taxon>
        <taxon>Actinomycetota</taxon>
        <taxon>Actinomycetes</taxon>
        <taxon>Pseudonocardiales</taxon>
        <taxon>Pseudonocardiaceae</taxon>
        <taxon>Amycolatopsis</taxon>
    </lineage>
</organism>
<name>CMCT_AMYLA</name>
<sequence length="486" mass="49325">MTSVRGASKTGRTSKTSTATTALVLACTAHFLVVFDTSVITVALPSVRADLGFAPASLQWVVNSYTLAFAGLLLFGGRLADIHGHRRVFLGGLAVFTLTSLIGGLATSPASLIAARAGQGAGAAVLAPLAVTMLTTSFAEGPRRTRALTISTAVALVGGASGNLLGGVFTEFLSWRSVLLVNVPIGIPVLFLAARVLAGPRKRPWGRVRLDLPGAVLATAGLTLLTLGVSQTHEHGWGEAAVAVPLAGGLLALLAFVVVEARFAASPLIPPRLFGLPGVGWGNLAMLLAGASQVPVWFFLTLSMQHVLGYSAAQAGLGFVPHALVMLVVGLRVVPWLMRHVQARVLIAAGAAIGALGFWWQSLLTPDSAYLGGILGPAVLISIGGGLVGTPLARTVTSGVGPLDAGAASGLMNTTRQFGGAFGLAVLLTVTGSGTSGSPAELASHYGDAFVGIAVFMLAIAVLTPVLPALARSTPPGVIHVSPVAR</sequence>
<reference key="1">
    <citation type="journal article" date="1993" name="EMBO J.">
        <title>Genes for a beta-lactamase, a penicillin-binding protein and a transmembrane protein are clustered with the cephamycin biosynthetic genes in Nocardia lactamdurans.</title>
        <authorList>
            <person name="Coque J.J.R."/>
            <person name="Liras P."/>
            <person name="Martin J.F."/>
        </authorList>
    </citation>
    <scope>NUCLEOTIDE SEQUENCE [GENOMIC DNA]</scope>
    <source>
        <strain>LC411</strain>
    </source>
</reference>
<comment type="function">
    <text>Involved in cephamycin export.</text>
</comment>
<comment type="subcellular location">
    <subcellularLocation>
        <location evidence="2">Cell membrane</location>
        <topology evidence="2">Multi-pass membrane protein</topology>
    </subcellularLocation>
</comment>
<comment type="similarity">
    <text evidence="2">Belongs to the major facilitator superfamily.</text>
</comment>
<keyword id="KW-0046">Antibiotic resistance</keyword>
<keyword id="KW-1003">Cell membrane</keyword>
<keyword id="KW-0472">Membrane</keyword>
<keyword id="KW-0812">Transmembrane</keyword>
<keyword id="KW-1133">Transmembrane helix</keyword>
<keyword id="KW-0813">Transport</keyword>
<accession>Q04733</accession>
<evidence type="ECO:0000255" key="1"/>
<evidence type="ECO:0000305" key="2"/>
<proteinExistence type="inferred from homology"/>
<gene>
    <name type="primary">cmcT</name>
</gene>